<dbReference type="EMBL" id="CP000025">
    <property type="protein sequence ID" value="AAW35187.1"/>
    <property type="molecule type" value="Genomic_DNA"/>
</dbReference>
<dbReference type="RefSeq" id="WP_002856760.1">
    <property type="nucleotide sequence ID" value="NC_003912.7"/>
</dbReference>
<dbReference type="SMR" id="Q5HV33"/>
<dbReference type="KEGG" id="cjr:CJE0850"/>
<dbReference type="HOGENOM" id="CLU_005965_2_4_7"/>
<dbReference type="GO" id="GO:0005524">
    <property type="term" value="F:ATP binding"/>
    <property type="evidence" value="ECO:0007669"/>
    <property type="project" value="UniProtKB-UniRule"/>
</dbReference>
<dbReference type="GO" id="GO:0140662">
    <property type="term" value="F:ATP-dependent protein folding chaperone"/>
    <property type="evidence" value="ECO:0007669"/>
    <property type="project" value="InterPro"/>
</dbReference>
<dbReference type="GO" id="GO:0051082">
    <property type="term" value="F:unfolded protein binding"/>
    <property type="evidence" value="ECO:0007669"/>
    <property type="project" value="InterPro"/>
</dbReference>
<dbReference type="GO" id="GO:0009408">
    <property type="term" value="P:response to heat"/>
    <property type="evidence" value="ECO:0000314"/>
    <property type="project" value="TIGR"/>
</dbReference>
<dbReference type="CDD" id="cd10234">
    <property type="entry name" value="ASKHA_NBD_HSP70_DnaK-like"/>
    <property type="match status" value="1"/>
</dbReference>
<dbReference type="FunFam" id="2.60.34.10:FF:000014">
    <property type="entry name" value="Chaperone protein DnaK HSP70"/>
    <property type="match status" value="1"/>
</dbReference>
<dbReference type="FunFam" id="1.20.1270.10:FF:000001">
    <property type="entry name" value="Molecular chaperone DnaK"/>
    <property type="match status" value="1"/>
</dbReference>
<dbReference type="FunFam" id="3.30.420.40:FF:000004">
    <property type="entry name" value="Molecular chaperone DnaK"/>
    <property type="match status" value="1"/>
</dbReference>
<dbReference type="FunFam" id="3.90.640.10:FF:000003">
    <property type="entry name" value="Molecular chaperone DnaK"/>
    <property type="match status" value="1"/>
</dbReference>
<dbReference type="Gene3D" id="1.20.1270.10">
    <property type="match status" value="1"/>
</dbReference>
<dbReference type="Gene3D" id="3.30.420.40">
    <property type="match status" value="2"/>
</dbReference>
<dbReference type="Gene3D" id="3.90.640.10">
    <property type="entry name" value="Actin, Chain A, domain 4"/>
    <property type="match status" value="1"/>
</dbReference>
<dbReference type="Gene3D" id="2.60.34.10">
    <property type="entry name" value="Substrate Binding Domain Of DNAk, Chain A, domain 1"/>
    <property type="match status" value="1"/>
</dbReference>
<dbReference type="HAMAP" id="MF_00332">
    <property type="entry name" value="DnaK"/>
    <property type="match status" value="1"/>
</dbReference>
<dbReference type="InterPro" id="IPR043129">
    <property type="entry name" value="ATPase_NBD"/>
</dbReference>
<dbReference type="InterPro" id="IPR012725">
    <property type="entry name" value="Chaperone_DnaK"/>
</dbReference>
<dbReference type="InterPro" id="IPR018181">
    <property type="entry name" value="Heat_shock_70_CS"/>
</dbReference>
<dbReference type="InterPro" id="IPR029048">
    <property type="entry name" value="HSP70_C_sf"/>
</dbReference>
<dbReference type="InterPro" id="IPR029047">
    <property type="entry name" value="HSP70_peptide-bd_sf"/>
</dbReference>
<dbReference type="InterPro" id="IPR013126">
    <property type="entry name" value="Hsp_70_fam"/>
</dbReference>
<dbReference type="NCBIfam" id="NF001413">
    <property type="entry name" value="PRK00290.1"/>
    <property type="match status" value="1"/>
</dbReference>
<dbReference type="NCBIfam" id="NF003520">
    <property type="entry name" value="PRK05183.1"/>
    <property type="match status" value="1"/>
</dbReference>
<dbReference type="NCBIfam" id="TIGR02350">
    <property type="entry name" value="prok_dnaK"/>
    <property type="match status" value="1"/>
</dbReference>
<dbReference type="PANTHER" id="PTHR19375">
    <property type="entry name" value="HEAT SHOCK PROTEIN 70KDA"/>
    <property type="match status" value="1"/>
</dbReference>
<dbReference type="Pfam" id="PF00012">
    <property type="entry name" value="HSP70"/>
    <property type="match status" value="1"/>
</dbReference>
<dbReference type="PRINTS" id="PR00301">
    <property type="entry name" value="HEATSHOCK70"/>
</dbReference>
<dbReference type="SUPFAM" id="SSF53067">
    <property type="entry name" value="Actin-like ATPase domain"/>
    <property type="match status" value="2"/>
</dbReference>
<dbReference type="SUPFAM" id="SSF100934">
    <property type="entry name" value="Heat shock protein 70kD (HSP70), C-terminal subdomain"/>
    <property type="match status" value="1"/>
</dbReference>
<dbReference type="SUPFAM" id="SSF100920">
    <property type="entry name" value="Heat shock protein 70kD (HSP70), peptide-binding domain"/>
    <property type="match status" value="1"/>
</dbReference>
<dbReference type="PROSITE" id="PS00297">
    <property type="entry name" value="HSP70_1"/>
    <property type="match status" value="1"/>
</dbReference>
<dbReference type="PROSITE" id="PS00329">
    <property type="entry name" value="HSP70_2"/>
    <property type="match status" value="1"/>
</dbReference>
<dbReference type="PROSITE" id="PS01036">
    <property type="entry name" value="HSP70_3"/>
    <property type="match status" value="1"/>
</dbReference>
<gene>
    <name evidence="1" type="primary">dnaK</name>
    <name type="ordered locus">CJE0850</name>
</gene>
<protein>
    <recommendedName>
        <fullName evidence="1">Chaperone protein DnaK</fullName>
    </recommendedName>
    <alternativeName>
        <fullName evidence="1">HSP70</fullName>
    </alternativeName>
    <alternativeName>
        <fullName evidence="1">Heat shock 70 kDa protein</fullName>
    </alternativeName>
    <alternativeName>
        <fullName evidence="1">Heat shock protein 70</fullName>
    </alternativeName>
</protein>
<evidence type="ECO:0000255" key="1">
    <source>
        <dbReference type="HAMAP-Rule" id="MF_00332"/>
    </source>
</evidence>
<evidence type="ECO:0000256" key="2">
    <source>
        <dbReference type="SAM" id="MobiDB-lite"/>
    </source>
</evidence>
<sequence length="623" mass="67416">MSKVIGIDLGTTNSCVAVYERGESKVIPNKEGKNTTPSVVAFTDKGEVLVGDSAKRQAVTNPEKTIYSIKRIMGLMINEDAAKEAKNRLPYHITERNGACAIEIAGKIYTPQEISAKVLMKLKEDAEAFLGESVVDAVITVPAYFNDAQRKATKEAGTIAGLNVLRIINEPTSAALAYGLDKKDSEKIVVYDLGGGTFDVTVLETGDNVVEVLATGGNAFLGGDDFDNKLIDFLANEFKDETGIDLKNDVMALQRLKEAAENAKKELSSANETEINLPFITADASGPKHLVKKLTRAKFEGMIDSLVAETITKINEVVSDAGLKKDEIKEIVMVGGSTRVPLVQEEVKKAFNKDLNKSVNPDEVVAIGAAIQGAVIKGDVKDVLLLDVTPLSLGIETLGGVMTKIIEKGTTIPTKKEQVFSTAEDNQSAVTINVLQGEREFSRDNKSLGNFNLEGIPPAPRGMPQIEVTFDIDANGILTVSAKDKATGKAQEIKITGSSGLSEEEINNMVKDAELHKEEDKKRKEAVDARNAADSLAHQVEKSLSELGEKVAAADKENIQKALDDLRETLKNQNASKEEIESKMKALSEVSHKLAENMYKKDEPNTANDKKKKDDDVIDAEVE</sequence>
<keyword id="KW-0067">ATP-binding</keyword>
<keyword id="KW-0143">Chaperone</keyword>
<keyword id="KW-0547">Nucleotide-binding</keyword>
<keyword id="KW-0597">Phosphoprotein</keyword>
<keyword id="KW-0346">Stress response</keyword>
<name>DNAK_CAMJR</name>
<organism>
    <name type="scientific">Campylobacter jejuni (strain RM1221)</name>
    <dbReference type="NCBI Taxonomy" id="195099"/>
    <lineage>
        <taxon>Bacteria</taxon>
        <taxon>Pseudomonadati</taxon>
        <taxon>Campylobacterota</taxon>
        <taxon>Epsilonproteobacteria</taxon>
        <taxon>Campylobacterales</taxon>
        <taxon>Campylobacteraceae</taxon>
        <taxon>Campylobacter</taxon>
    </lineage>
</organism>
<proteinExistence type="inferred from homology"/>
<reference key="1">
    <citation type="journal article" date="2005" name="PLoS Biol.">
        <title>Major structural differences and novel potential virulence mechanisms from the genomes of multiple Campylobacter species.</title>
        <authorList>
            <person name="Fouts D.E."/>
            <person name="Mongodin E.F."/>
            <person name="Mandrell R.E."/>
            <person name="Miller W.G."/>
            <person name="Rasko D.A."/>
            <person name="Ravel J."/>
            <person name="Brinkac L.M."/>
            <person name="DeBoy R.T."/>
            <person name="Parker C.T."/>
            <person name="Daugherty S.C."/>
            <person name="Dodson R.J."/>
            <person name="Durkin A.S."/>
            <person name="Madupu R."/>
            <person name="Sullivan S.A."/>
            <person name="Shetty J.U."/>
            <person name="Ayodeji M.A."/>
            <person name="Shvartsbeyn A."/>
            <person name="Schatz M.C."/>
            <person name="Badger J.H."/>
            <person name="Fraser C.M."/>
            <person name="Nelson K.E."/>
        </authorList>
    </citation>
    <scope>NUCLEOTIDE SEQUENCE [LARGE SCALE GENOMIC DNA]</scope>
    <source>
        <strain>RM1221</strain>
    </source>
</reference>
<feature type="chain" id="PRO_0000225947" description="Chaperone protein DnaK">
    <location>
        <begin position="1"/>
        <end position="623"/>
    </location>
</feature>
<feature type="region of interest" description="Disordered" evidence="2">
    <location>
        <begin position="595"/>
        <end position="623"/>
    </location>
</feature>
<feature type="compositionally biased region" description="Basic and acidic residues" evidence="2">
    <location>
        <begin position="595"/>
        <end position="615"/>
    </location>
</feature>
<feature type="modified residue" description="Phosphothreonine; by autocatalysis" evidence="1">
    <location>
        <position position="197"/>
    </location>
</feature>
<accession>Q5HV33</accession>
<comment type="function">
    <text evidence="1">Acts as a chaperone.</text>
</comment>
<comment type="induction">
    <text evidence="1">By stress conditions e.g. heat shock.</text>
</comment>
<comment type="similarity">
    <text evidence="1">Belongs to the heat shock protein 70 family.</text>
</comment>